<sequence length="289" mass="31630">MTGREILHKMKESVKEKVGLGASASSADSGKGKSKMLKQITHGFHLVKGKAFHEMEDYVVAKFKEVDDNELGLFAIFDGHLSHEIPDYLCSHLFENILKEPNFWQEPEKAIKKAYYITDTTILDKADDLGKGGSTAVTAILINCQKLVVANVGDSRAVICQNGVAKPLSVDHEPNMEKDEIENRGGFVSNFPGDVPRVDGQLAVARAFGDKSLKMHLSSEPYVTVEIIDDDAEFLILASDGLWKVMSNQEAVDSIKGIKDAKAAAKHLAEEAVARKSSDDISVVVVKFQ</sequence>
<organism>
    <name type="scientific">Arabidopsis thaliana</name>
    <name type="common">Mouse-ear cress</name>
    <dbReference type="NCBI Taxonomy" id="3702"/>
    <lineage>
        <taxon>Eukaryota</taxon>
        <taxon>Viridiplantae</taxon>
        <taxon>Streptophyta</taxon>
        <taxon>Embryophyta</taxon>
        <taxon>Tracheophyta</taxon>
        <taxon>Spermatophyta</taxon>
        <taxon>Magnoliopsida</taxon>
        <taxon>eudicotyledons</taxon>
        <taxon>Gunneridae</taxon>
        <taxon>Pentapetalae</taxon>
        <taxon>rosids</taxon>
        <taxon>malvids</taxon>
        <taxon>Brassicales</taxon>
        <taxon>Brassicaceae</taxon>
        <taxon>Camelineae</taxon>
        <taxon>Arabidopsis</taxon>
    </lineage>
</organism>
<reference key="1">
    <citation type="journal article" date="2000" name="DNA Res.">
        <title>Structural analysis of Arabidopsis thaliana chromosome 3. II. Sequence features of the 4,251,695 bp regions covered by 90 P1, TAC and BAC clones.</title>
        <authorList>
            <person name="Kaneko T."/>
            <person name="Katoh T."/>
            <person name="Sato S."/>
            <person name="Nakamura Y."/>
            <person name="Asamizu E."/>
            <person name="Tabata S."/>
        </authorList>
    </citation>
    <scope>NUCLEOTIDE SEQUENCE [LARGE SCALE GENOMIC DNA]</scope>
    <source>
        <strain>cv. Columbia</strain>
    </source>
</reference>
<reference key="2">
    <citation type="journal article" date="2017" name="Plant J.">
        <title>Araport11: a complete reannotation of the Arabidopsis thaliana reference genome.</title>
        <authorList>
            <person name="Cheng C.Y."/>
            <person name="Krishnakumar V."/>
            <person name="Chan A.P."/>
            <person name="Thibaud-Nissen F."/>
            <person name="Schobel S."/>
            <person name="Town C.D."/>
        </authorList>
    </citation>
    <scope>GENOME REANNOTATION</scope>
    <source>
        <strain>cv. Columbia</strain>
    </source>
</reference>
<reference key="3">
    <citation type="journal article" date="2002" name="Science">
        <title>Functional annotation of a full-length Arabidopsis cDNA collection.</title>
        <authorList>
            <person name="Seki M."/>
            <person name="Narusaka M."/>
            <person name="Kamiya A."/>
            <person name="Ishida J."/>
            <person name="Satou M."/>
            <person name="Sakurai T."/>
            <person name="Nakajima M."/>
            <person name="Enju A."/>
            <person name="Akiyama K."/>
            <person name="Oono Y."/>
            <person name="Muramatsu M."/>
            <person name="Hayashizaki Y."/>
            <person name="Kawai J."/>
            <person name="Carninci P."/>
            <person name="Itoh M."/>
            <person name="Ishii Y."/>
            <person name="Arakawa T."/>
            <person name="Shibata K."/>
            <person name="Shinagawa A."/>
            <person name="Shinozaki K."/>
        </authorList>
    </citation>
    <scope>NUCLEOTIDE SEQUENCE [LARGE SCALE MRNA]</scope>
    <source>
        <strain>cv. Columbia</strain>
    </source>
</reference>
<reference key="4">
    <citation type="journal article" date="2003" name="Science">
        <title>Empirical analysis of transcriptional activity in the Arabidopsis genome.</title>
        <authorList>
            <person name="Yamada K."/>
            <person name="Lim J."/>
            <person name="Dale J.M."/>
            <person name="Chen H."/>
            <person name="Shinn P."/>
            <person name="Palm C.J."/>
            <person name="Southwick A.M."/>
            <person name="Wu H.C."/>
            <person name="Kim C.J."/>
            <person name="Nguyen M."/>
            <person name="Pham P.K."/>
            <person name="Cheuk R.F."/>
            <person name="Karlin-Newmann G."/>
            <person name="Liu S.X."/>
            <person name="Lam B."/>
            <person name="Sakano H."/>
            <person name="Wu T."/>
            <person name="Yu G."/>
            <person name="Miranda M."/>
            <person name="Quach H.L."/>
            <person name="Tripp M."/>
            <person name="Chang C.H."/>
            <person name="Lee J.M."/>
            <person name="Toriumi M.J."/>
            <person name="Chan M.M."/>
            <person name="Tang C.C."/>
            <person name="Onodera C.S."/>
            <person name="Deng J.M."/>
            <person name="Akiyama K."/>
            <person name="Ansari Y."/>
            <person name="Arakawa T."/>
            <person name="Banh J."/>
            <person name="Banno F."/>
            <person name="Bowser L."/>
            <person name="Brooks S.Y."/>
            <person name="Carninci P."/>
            <person name="Chao Q."/>
            <person name="Choy N."/>
            <person name="Enju A."/>
            <person name="Goldsmith A.D."/>
            <person name="Gurjal M."/>
            <person name="Hansen N.F."/>
            <person name="Hayashizaki Y."/>
            <person name="Johnson-Hopson C."/>
            <person name="Hsuan V.W."/>
            <person name="Iida K."/>
            <person name="Karnes M."/>
            <person name="Khan S."/>
            <person name="Koesema E."/>
            <person name="Ishida J."/>
            <person name="Jiang P.X."/>
            <person name="Jones T."/>
            <person name="Kawai J."/>
            <person name="Kamiya A."/>
            <person name="Meyers C."/>
            <person name="Nakajima M."/>
            <person name="Narusaka M."/>
            <person name="Seki M."/>
            <person name="Sakurai T."/>
            <person name="Satou M."/>
            <person name="Tamse R."/>
            <person name="Vaysberg M."/>
            <person name="Wallender E.K."/>
            <person name="Wong C."/>
            <person name="Yamamura Y."/>
            <person name="Yuan S."/>
            <person name="Shinozaki K."/>
            <person name="Davis R.W."/>
            <person name="Theologis A."/>
            <person name="Ecker J.R."/>
        </authorList>
    </citation>
    <scope>NUCLEOTIDE SEQUENCE [LARGE SCALE MRNA]</scope>
    <source>
        <strain>cv. Columbia</strain>
    </source>
</reference>
<reference key="5">
    <citation type="journal article" date="2008" name="BMC Genomics">
        <title>Genome-wide and expression analysis of protein phosphatase 2C in rice and Arabidopsis.</title>
        <authorList>
            <person name="Xue T."/>
            <person name="Wang D."/>
            <person name="Zhang S."/>
            <person name="Ehlting J."/>
            <person name="Ni F."/>
            <person name="Jacab S."/>
            <person name="Zheng C."/>
            <person name="Zhong Y."/>
        </authorList>
    </citation>
    <scope>GENE FAMILY</scope>
    <scope>NOMENCLATURE</scope>
</reference>
<dbReference type="EC" id="3.1.3.16"/>
<dbReference type="EMBL" id="AP000413">
    <property type="protein sequence ID" value="BAB02155.1"/>
    <property type="molecule type" value="Genomic_DNA"/>
</dbReference>
<dbReference type="EMBL" id="CP002686">
    <property type="protein sequence ID" value="AEE75637.1"/>
    <property type="molecule type" value="Genomic_DNA"/>
</dbReference>
<dbReference type="EMBL" id="CP002686">
    <property type="protein sequence ID" value="AEE75638.1"/>
    <property type="molecule type" value="Genomic_DNA"/>
</dbReference>
<dbReference type="EMBL" id="AK117480">
    <property type="protein sequence ID" value="BAC42144.1"/>
    <property type="molecule type" value="mRNA"/>
</dbReference>
<dbReference type="EMBL" id="AY120770">
    <property type="protein sequence ID" value="AAM53328.1"/>
    <property type="molecule type" value="mRNA"/>
</dbReference>
<dbReference type="EMBL" id="BT008532">
    <property type="protein sequence ID" value="AAP40359.1"/>
    <property type="molecule type" value="mRNA"/>
</dbReference>
<dbReference type="RefSeq" id="NP_188144.1">
    <property type="nucleotide sequence ID" value="NM_112389.4"/>
</dbReference>
<dbReference type="RefSeq" id="NP_974318.1">
    <property type="nucleotide sequence ID" value="NM_202589.2"/>
</dbReference>
<dbReference type="SMR" id="Q9LDA7"/>
<dbReference type="BioGRID" id="6091">
    <property type="interactions" value="1"/>
</dbReference>
<dbReference type="FunCoup" id="Q9LDA7">
    <property type="interactions" value="528"/>
</dbReference>
<dbReference type="IntAct" id="Q9LDA7">
    <property type="interactions" value="1"/>
</dbReference>
<dbReference type="MINT" id="Q9LDA7"/>
<dbReference type="iPTMnet" id="Q9LDA7"/>
<dbReference type="PaxDb" id="3702-AT3G15260.2"/>
<dbReference type="ProteomicsDB" id="248877"/>
<dbReference type="EnsemblPlants" id="AT3G15260.1">
    <property type="protein sequence ID" value="AT3G15260.1"/>
    <property type="gene ID" value="AT3G15260"/>
</dbReference>
<dbReference type="EnsemblPlants" id="AT3G15260.2">
    <property type="protein sequence ID" value="AT3G15260.2"/>
    <property type="gene ID" value="AT3G15260"/>
</dbReference>
<dbReference type="GeneID" id="820757"/>
<dbReference type="Gramene" id="AT3G15260.1">
    <property type="protein sequence ID" value="AT3G15260.1"/>
    <property type="gene ID" value="AT3G15260"/>
</dbReference>
<dbReference type="Gramene" id="AT3G15260.2">
    <property type="protein sequence ID" value="AT3G15260.2"/>
    <property type="gene ID" value="AT3G15260"/>
</dbReference>
<dbReference type="KEGG" id="ath:AT3G15260"/>
<dbReference type="Araport" id="AT3G15260"/>
<dbReference type="TAIR" id="AT3G15260"/>
<dbReference type="eggNOG" id="KOG0698">
    <property type="taxonomic scope" value="Eukaryota"/>
</dbReference>
<dbReference type="HOGENOM" id="CLU_013173_0_1_1"/>
<dbReference type="InParanoid" id="Q9LDA7"/>
<dbReference type="OMA" id="FACSLHI"/>
<dbReference type="PhylomeDB" id="Q9LDA7"/>
<dbReference type="PRO" id="PR:Q9LDA7"/>
<dbReference type="Proteomes" id="UP000006548">
    <property type="component" value="Chromosome 3"/>
</dbReference>
<dbReference type="ExpressionAtlas" id="Q9LDA7">
    <property type="expression patterns" value="baseline and differential"/>
</dbReference>
<dbReference type="GO" id="GO:0005829">
    <property type="term" value="C:cytosol"/>
    <property type="evidence" value="ECO:0007005"/>
    <property type="project" value="TAIR"/>
</dbReference>
<dbReference type="GO" id="GO:0046872">
    <property type="term" value="F:metal ion binding"/>
    <property type="evidence" value="ECO:0007669"/>
    <property type="project" value="UniProtKB-KW"/>
</dbReference>
<dbReference type="GO" id="GO:0004722">
    <property type="term" value="F:protein serine/threonine phosphatase activity"/>
    <property type="evidence" value="ECO:0007669"/>
    <property type="project" value="UniProtKB-EC"/>
</dbReference>
<dbReference type="CDD" id="cd00143">
    <property type="entry name" value="PP2Cc"/>
    <property type="match status" value="1"/>
</dbReference>
<dbReference type="FunFam" id="3.60.40.10:FF:000010">
    <property type="entry name" value="Probable protein phosphatase 2C 39"/>
    <property type="match status" value="1"/>
</dbReference>
<dbReference type="Gene3D" id="3.60.40.10">
    <property type="entry name" value="PPM-type phosphatase domain"/>
    <property type="match status" value="1"/>
</dbReference>
<dbReference type="InterPro" id="IPR015655">
    <property type="entry name" value="PP2C"/>
</dbReference>
<dbReference type="InterPro" id="IPR036457">
    <property type="entry name" value="PPM-type-like_dom_sf"/>
</dbReference>
<dbReference type="InterPro" id="IPR001932">
    <property type="entry name" value="PPM-type_phosphatase-like_dom"/>
</dbReference>
<dbReference type="PANTHER" id="PTHR47992">
    <property type="entry name" value="PROTEIN PHOSPHATASE"/>
    <property type="match status" value="1"/>
</dbReference>
<dbReference type="Pfam" id="PF00481">
    <property type="entry name" value="PP2C"/>
    <property type="match status" value="1"/>
</dbReference>
<dbReference type="SMART" id="SM00332">
    <property type="entry name" value="PP2Cc"/>
    <property type="match status" value="1"/>
</dbReference>
<dbReference type="SUPFAM" id="SSF81606">
    <property type="entry name" value="PP2C-like"/>
    <property type="match status" value="1"/>
</dbReference>
<dbReference type="PROSITE" id="PS51746">
    <property type="entry name" value="PPM_2"/>
    <property type="match status" value="1"/>
</dbReference>
<evidence type="ECO:0000250" key="1"/>
<evidence type="ECO:0000255" key="2">
    <source>
        <dbReference type="PROSITE-ProRule" id="PRU01082"/>
    </source>
</evidence>
<evidence type="ECO:0000305" key="3"/>
<keyword id="KW-0378">Hydrolase</keyword>
<keyword id="KW-0460">Magnesium</keyword>
<keyword id="KW-0464">Manganese</keyword>
<keyword id="KW-0479">Metal-binding</keyword>
<keyword id="KW-0904">Protein phosphatase</keyword>
<keyword id="KW-1185">Reference proteome</keyword>
<proteinExistence type="evidence at transcript level"/>
<feature type="chain" id="PRO_0000367964" description="Probable protein phosphatase 2C 39">
    <location>
        <begin position="1"/>
        <end position="289"/>
    </location>
</feature>
<feature type="domain" description="PPM-type phosphatase" evidence="2">
    <location>
        <begin position="41"/>
        <end position="288"/>
    </location>
</feature>
<feature type="binding site" evidence="1">
    <location>
        <position position="78"/>
    </location>
    <ligand>
        <name>Mn(2+)</name>
        <dbReference type="ChEBI" id="CHEBI:29035"/>
        <label>1</label>
    </ligand>
</feature>
<feature type="binding site" evidence="1">
    <location>
        <position position="78"/>
    </location>
    <ligand>
        <name>Mn(2+)</name>
        <dbReference type="ChEBI" id="CHEBI:29035"/>
        <label>2</label>
    </ligand>
</feature>
<feature type="binding site" evidence="1">
    <location>
        <position position="79"/>
    </location>
    <ligand>
        <name>Mn(2+)</name>
        <dbReference type="ChEBI" id="CHEBI:29035"/>
        <label>1</label>
    </ligand>
</feature>
<feature type="binding site" evidence="1">
    <location>
        <position position="240"/>
    </location>
    <ligand>
        <name>Mn(2+)</name>
        <dbReference type="ChEBI" id="CHEBI:29035"/>
        <label>2</label>
    </ligand>
</feature>
<feature type="binding site" evidence="1">
    <location>
        <position position="279"/>
    </location>
    <ligand>
        <name>Mn(2+)</name>
        <dbReference type="ChEBI" id="CHEBI:29035"/>
        <label>2</label>
    </ligand>
</feature>
<feature type="sequence conflict" description="In Ref. 4; AAM53328." evidence="3" ref="4">
    <original>M</original>
    <variation>I</variation>
    <location>
        <position position="55"/>
    </location>
</feature>
<name>P2C39_ARATH</name>
<protein>
    <recommendedName>
        <fullName>Probable protein phosphatase 2C 39</fullName>
        <shortName>AtPP2C39</shortName>
        <ecNumber>3.1.3.16</ecNumber>
    </recommendedName>
</protein>
<comment type="catalytic activity">
    <reaction>
        <text>O-phospho-L-seryl-[protein] + H2O = L-seryl-[protein] + phosphate</text>
        <dbReference type="Rhea" id="RHEA:20629"/>
        <dbReference type="Rhea" id="RHEA-COMP:9863"/>
        <dbReference type="Rhea" id="RHEA-COMP:11604"/>
        <dbReference type="ChEBI" id="CHEBI:15377"/>
        <dbReference type="ChEBI" id="CHEBI:29999"/>
        <dbReference type="ChEBI" id="CHEBI:43474"/>
        <dbReference type="ChEBI" id="CHEBI:83421"/>
        <dbReference type="EC" id="3.1.3.16"/>
    </reaction>
</comment>
<comment type="catalytic activity">
    <reaction>
        <text>O-phospho-L-threonyl-[protein] + H2O = L-threonyl-[protein] + phosphate</text>
        <dbReference type="Rhea" id="RHEA:47004"/>
        <dbReference type="Rhea" id="RHEA-COMP:11060"/>
        <dbReference type="Rhea" id="RHEA-COMP:11605"/>
        <dbReference type="ChEBI" id="CHEBI:15377"/>
        <dbReference type="ChEBI" id="CHEBI:30013"/>
        <dbReference type="ChEBI" id="CHEBI:43474"/>
        <dbReference type="ChEBI" id="CHEBI:61977"/>
        <dbReference type="EC" id="3.1.3.16"/>
    </reaction>
</comment>
<comment type="cofactor">
    <cofactor evidence="1">
        <name>Mg(2+)</name>
        <dbReference type="ChEBI" id="CHEBI:18420"/>
    </cofactor>
    <cofactor evidence="1">
        <name>Mn(2+)</name>
        <dbReference type="ChEBI" id="CHEBI:29035"/>
    </cofactor>
    <text evidence="1">Binds 2 magnesium or manganese ions per subunit.</text>
</comment>
<comment type="similarity">
    <text evidence="3">Belongs to the PP2C family.</text>
</comment>
<gene>
    <name type="ordered locus">At3g15260</name>
    <name type="ORF">K7L4.6</name>
</gene>
<accession>Q9LDA7</accession>
<accession>Q8L834</accession>